<keyword id="KW-0378">Hydrolase</keyword>
<keyword id="KW-0479">Metal-binding</keyword>
<keyword id="KW-0665">Pyrimidine biosynthesis</keyword>
<keyword id="KW-1185">Reference proteome</keyword>
<keyword id="KW-0862">Zinc</keyword>
<accession>Q9K9V7</accession>
<comment type="function">
    <text evidence="1">Catalyzes the reversible cyclization of carbamoyl aspartate to dihydroorotate.</text>
</comment>
<comment type="catalytic activity">
    <reaction evidence="1">
        <text>(S)-dihydroorotate + H2O = N-carbamoyl-L-aspartate + H(+)</text>
        <dbReference type="Rhea" id="RHEA:24296"/>
        <dbReference type="ChEBI" id="CHEBI:15377"/>
        <dbReference type="ChEBI" id="CHEBI:15378"/>
        <dbReference type="ChEBI" id="CHEBI:30864"/>
        <dbReference type="ChEBI" id="CHEBI:32814"/>
        <dbReference type="EC" id="3.5.2.3"/>
    </reaction>
</comment>
<comment type="cofactor">
    <cofactor evidence="1">
        <name>Zn(2+)</name>
        <dbReference type="ChEBI" id="CHEBI:29105"/>
    </cofactor>
    <text evidence="1">Binds 2 Zn(2+) ions per subunit.</text>
</comment>
<comment type="pathway">
    <text evidence="1">Pyrimidine metabolism; UMP biosynthesis via de novo pathway; (S)-dihydroorotate from bicarbonate: step 3/3.</text>
</comment>
<comment type="similarity">
    <text evidence="1">Belongs to the metallo-dependent hydrolases superfamily. DHOase family. Class I DHOase subfamily.</text>
</comment>
<reference key="1">
    <citation type="journal article" date="2000" name="Nucleic Acids Res.">
        <title>Complete genome sequence of the alkaliphilic bacterium Bacillus halodurans and genomic sequence comparison with Bacillus subtilis.</title>
        <authorList>
            <person name="Takami H."/>
            <person name="Nakasone K."/>
            <person name="Takaki Y."/>
            <person name="Maeno G."/>
            <person name="Sasaki R."/>
            <person name="Masui N."/>
            <person name="Fuji F."/>
            <person name="Hirama C."/>
            <person name="Nakamura Y."/>
            <person name="Ogasawara N."/>
            <person name="Kuhara S."/>
            <person name="Horikoshi K."/>
        </authorList>
    </citation>
    <scope>NUCLEOTIDE SEQUENCE [LARGE SCALE GENOMIC DNA]</scope>
    <source>
        <strain>ATCC BAA-125 / DSM 18197 / FERM 7344 / JCM 9153 / C-125</strain>
    </source>
</reference>
<sequence length="428" mass="46284">MKTLIKNGSIVTKEGTVKTQDVLLHDGVISAIGLNLEETDAHVIEANGKLVTPGLVDLHVHLREPGGEAKETIETGTKAAAKGGFTTVAAMPNTRPVPDSAEQMSWLTGRIDETGVVRVLPYAAITTRQLGRELTDFAKLKEAGAFAFTDDGVGVQSAAMMLEAMKEAAKLEMAIVAHCEENTLIQNGSVHEGVFSKKHGIAGIPSVCESVHIARDVLLAEAAGVHYHVCHISTKESVRVVRDAKRAGIRVTAEVTPHHLLLCDEDIPGLDAHYKMNPPLRGKEDREALIEGLLDGTIDFIATDHAPHTEEEKGQGMERAPFGIVGLETAFPLLYTHFVKKGTFTLKQLVDWLTIDPAETFQLPYGRLEEGAPADVTIIDLEAERAIDPAHFASKGRNTPFAGWTCQGWPVATLVGGKLVWEEKEVAR</sequence>
<proteinExistence type="inferred from homology"/>
<organism>
    <name type="scientific">Halalkalibacterium halodurans (strain ATCC BAA-125 / DSM 18197 / FERM 7344 / JCM 9153 / C-125)</name>
    <name type="common">Bacillus halodurans</name>
    <dbReference type="NCBI Taxonomy" id="272558"/>
    <lineage>
        <taxon>Bacteria</taxon>
        <taxon>Bacillati</taxon>
        <taxon>Bacillota</taxon>
        <taxon>Bacilli</taxon>
        <taxon>Bacillales</taxon>
        <taxon>Bacillaceae</taxon>
        <taxon>Halalkalibacterium (ex Joshi et al. 2022)</taxon>
    </lineage>
</organism>
<feature type="chain" id="PRO_0000147228" description="Dihydroorotase">
    <location>
        <begin position="1"/>
        <end position="428"/>
    </location>
</feature>
<feature type="active site" evidence="1">
    <location>
        <position position="304"/>
    </location>
</feature>
<feature type="binding site" evidence="1">
    <location>
        <position position="59"/>
    </location>
    <ligand>
        <name>Zn(2+)</name>
        <dbReference type="ChEBI" id="CHEBI:29105"/>
        <label>1</label>
    </ligand>
</feature>
<feature type="binding site" evidence="1">
    <location>
        <begin position="61"/>
        <end position="63"/>
    </location>
    <ligand>
        <name>substrate</name>
    </ligand>
</feature>
<feature type="binding site" evidence="1">
    <location>
        <position position="61"/>
    </location>
    <ligand>
        <name>Zn(2+)</name>
        <dbReference type="ChEBI" id="CHEBI:29105"/>
        <label>1</label>
    </ligand>
</feature>
<feature type="binding site" evidence="1">
    <location>
        <position position="93"/>
    </location>
    <ligand>
        <name>substrate</name>
    </ligand>
</feature>
<feature type="binding site" evidence="1">
    <location>
        <position position="151"/>
    </location>
    <ligand>
        <name>Zn(2+)</name>
        <dbReference type="ChEBI" id="CHEBI:29105"/>
        <label>1</label>
    </ligand>
</feature>
<feature type="binding site" evidence="1">
    <location>
        <position position="151"/>
    </location>
    <ligand>
        <name>Zn(2+)</name>
        <dbReference type="ChEBI" id="CHEBI:29105"/>
        <label>2</label>
    </ligand>
</feature>
<feature type="binding site" evidence="1">
    <location>
        <position position="178"/>
    </location>
    <ligand>
        <name>Zn(2+)</name>
        <dbReference type="ChEBI" id="CHEBI:29105"/>
        <label>2</label>
    </ligand>
</feature>
<feature type="binding site" evidence="1">
    <location>
        <position position="231"/>
    </location>
    <ligand>
        <name>Zn(2+)</name>
        <dbReference type="ChEBI" id="CHEBI:29105"/>
        <label>2</label>
    </ligand>
</feature>
<feature type="binding site" evidence="1">
    <location>
        <position position="277"/>
    </location>
    <ligand>
        <name>substrate</name>
    </ligand>
</feature>
<feature type="binding site" evidence="1">
    <location>
        <position position="304"/>
    </location>
    <ligand>
        <name>Zn(2+)</name>
        <dbReference type="ChEBI" id="CHEBI:29105"/>
        <label>1</label>
    </ligand>
</feature>
<feature type="binding site" evidence="1">
    <location>
        <position position="308"/>
    </location>
    <ligand>
        <name>substrate</name>
    </ligand>
</feature>
<feature type="binding site" evidence="1">
    <location>
        <begin position="322"/>
        <end position="323"/>
    </location>
    <ligand>
        <name>substrate</name>
    </ligand>
</feature>
<protein>
    <recommendedName>
        <fullName evidence="1">Dihydroorotase</fullName>
        <shortName evidence="1">DHOase</shortName>
        <ecNumber evidence="1">3.5.2.3</ecNumber>
    </recommendedName>
</protein>
<gene>
    <name evidence="1" type="primary">pyrC</name>
    <name type="ordered locus">BH2538</name>
</gene>
<evidence type="ECO:0000255" key="1">
    <source>
        <dbReference type="HAMAP-Rule" id="MF_00220"/>
    </source>
</evidence>
<name>PYRC_HALH5</name>
<dbReference type="EC" id="3.5.2.3" evidence="1"/>
<dbReference type="EMBL" id="BA000004">
    <property type="protein sequence ID" value="BAB06257.1"/>
    <property type="molecule type" value="Genomic_DNA"/>
</dbReference>
<dbReference type="PIR" id="B83967">
    <property type="entry name" value="B83967"/>
</dbReference>
<dbReference type="RefSeq" id="WP_010898689.1">
    <property type="nucleotide sequence ID" value="NC_002570.2"/>
</dbReference>
<dbReference type="SMR" id="Q9K9V7"/>
<dbReference type="STRING" id="272558.gene:10728436"/>
<dbReference type="KEGG" id="bha:BH2538"/>
<dbReference type="eggNOG" id="COG0044">
    <property type="taxonomic scope" value="Bacteria"/>
</dbReference>
<dbReference type="HOGENOM" id="CLU_015572_1_0_9"/>
<dbReference type="OrthoDB" id="9765462at2"/>
<dbReference type="UniPathway" id="UPA00070">
    <property type="reaction ID" value="UER00117"/>
</dbReference>
<dbReference type="Proteomes" id="UP000001258">
    <property type="component" value="Chromosome"/>
</dbReference>
<dbReference type="GO" id="GO:0005737">
    <property type="term" value="C:cytoplasm"/>
    <property type="evidence" value="ECO:0007669"/>
    <property type="project" value="TreeGrafter"/>
</dbReference>
<dbReference type="GO" id="GO:0004038">
    <property type="term" value="F:allantoinase activity"/>
    <property type="evidence" value="ECO:0007669"/>
    <property type="project" value="TreeGrafter"/>
</dbReference>
<dbReference type="GO" id="GO:0004151">
    <property type="term" value="F:dihydroorotase activity"/>
    <property type="evidence" value="ECO:0007669"/>
    <property type="project" value="UniProtKB-UniRule"/>
</dbReference>
<dbReference type="GO" id="GO:0008270">
    <property type="term" value="F:zinc ion binding"/>
    <property type="evidence" value="ECO:0007669"/>
    <property type="project" value="UniProtKB-UniRule"/>
</dbReference>
<dbReference type="GO" id="GO:0044205">
    <property type="term" value="P:'de novo' UMP biosynthetic process"/>
    <property type="evidence" value="ECO:0007669"/>
    <property type="project" value="UniProtKB-UniRule"/>
</dbReference>
<dbReference type="GO" id="GO:0006145">
    <property type="term" value="P:purine nucleobase catabolic process"/>
    <property type="evidence" value="ECO:0007669"/>
    <property type="project" value="TreeGrafter"/>
</dbReference>
<dbReference type="CDD" id="cd01317">
    <property type="entry name" value="DHOase_IIa"/>
    <property type="match status" value="1"/>
</dbReference>
<dbReference type="Gene3D" id="3.20.20.140">
    <property type="entry name" value="Metal-dependent hydrolases"/>
    <property type="match status" value="1"/>
</dbReference>
<dbReference type="Gene3D" id="2.30.40.10">
    <property type="entry name" value="Urease, subunit C, domain 1"/>
    <property type="match status" value="1"/>
</dbReference>
<dbReference type="HAMAP" id="MF_00220_B">
    <property type="entry name" value="PyrC_classI_B"/>
    <property type="match status" value="1"/>
</dbReference>
<dbReference type="InterPro" id="IPR006680">
    <property type="entry name" value="Amidohydro-rel"/>
</dbReference>
<dbReference type="InterPro" id="IPR004722">
    <property type="entry name" value="DHOase"/>
</dbReference>
<dbReference type="InterPro" id="IPR050138">
    <property type="entry name" value="DHOase/Allantoinase_Hydrolase"/>
</dbReference>
<dbReference type="InterPro" id="IPR002195">
    <property type="entry name" value="Dihydroorotase_CS"/>
</dbReference>
<dbReference type="InterPro" id="IPR011059">
    <property type="entry name" value="Metal-dep_hydrolase_composite"/>
</dbReference>
<dbReference type="InterPro" id="IPR032466">
    <property type="entry name" value="Metal_Hydrolase"/>
</dbReference>
<dbReference type="NCBIfam" id="NF006837">
    <property type="entry name" value="PRK09357.1-2"/>
    <property type="match status" value="1"/>
</dbReference>
<dbReference type="NCBIfam" id="TIGR00857">
    <property type="entry name" value="pyrC_multi"/>
    <property type="match status" value="1"/>
</dbReference>
<dbReference type="PANTHER" id="PTHR43668">
    <property type="entry name" value="ALLANTOINASE"/>
    <property type="match status" value="1"/>
</dbReference>
<dbReference type="PANTHER" id="PTHR43668:SF2">
    <property type="entry name" value="ALLANTOINASE"/>
    <property type="match status" value="1"/>
</dbReference>
<dbReference type="Pfam" id="PF01979">
    <property type="entry name" value="Amidohydro_1"/>
    <property type="match status" value="1"/>
</dbReference>
<dbReference type="SUPFAM" id="SSF51338">
    <property type="entry name" value="Composite domain of metallo-dependent hydrolases"/>
    <property type="match status" value="1"/>
</dbReference>
<dbReference type="SUPFAM" id="SSF51556">
    <property type="entry name" value="Metallo-dependent hydrolases"/>
    <property type="match status" value="1"/>
</dbReference>
<dbReference type="PROSITE" id="PS00482">
    <property type="entry name" value="DIHYDROOROTASE_1"/>
    <property type="match status" value="1"/>
</dbReference>
<dbReference type="PROSITE" id="PS00483">
    <property type="entry name" value="DIHYDROOROTASE_2"/>
    <property type="match status" value="1"/>
</dbReference>